<comment type="subcellular location">
    <subcellularLocation>
        <location evidence="1">Cytoplasm</location>
    </subcellularLocation>
    <subcellularLocation>
        <location evidence="1">Nucleus membrane</location>
        <topology evidence="3">Single-pass membrane protein</topology>
    </subcellularLocation>
    <text evidence="1">Localizes to cytoplasmic dots and the nuclear envelope.</text>
</comment>
<comment type="similarity">
    <text evidence="3">Belongs to the UPF0742 family.</text>
</comment>
<protein>
    <recommendedName>
        <fullName>UPF0742 protein SPAC750.04c</fullName>
    </recommendedName>
</protein>
<gene>
    <name type="ORF">SPAC750.04c</name>
</gene>
<proteinExistence type="inferred from homology"/>
<organism>
    <name type="scientific">Schizosaccharomyces pombe (strain 972 / ATCC 24843)</name>
    <name type="common">Fission yeast</name>
    <dbReference type="NCBI Taxonomy" id="284812"/>
    <lineage>
        <taxon>Eukaryota</taxon>
        <taxon>Fungi</taxon>
        <taxon>Dikarya</taxon>
        <taxon>Ascomycota</taxon>
        <taxon>Taphrinomycotina</taxon>
        <taxon>Schizosaccharomycetes</taxon>
        <taxon>Schizosaccharomycetales</taxon>
        <taxon>Schizosaccharomycetaceae</taxon>
        <taxon>Schizosaccharomyces</taxon>
    </lineage>
</organism>
<dbReference type="EMBL" id="CU329670">
    <property type="protein sequence ID" value="CAB98255.1"/>
    <property type="molecule type" value="Genomic_DNA"/>
</dbReference>
<dbReference type="PIR" id="T50275">
    <property type="entry name" value="T50275"/>
</dbReference>
<dbReference type="STRING" id="284812.P0CU06"/>
<dbReference type="EnsemblFungi" id="SPAC750.04c.1">
    <property type="protein sequence ID" value="SPAC750.04c.1:pep"/>
    <property type="gene ID" value="SPAC750.04c"/>
</dbReference>
<dbReference type="EnsemblFungi" id="SPAC977.02.1">
    <property type="protein sequence ID" value="SPAC977.02.1:pep"/>
    <property type="gene ID" value="SPAC977.02"/>
</dbReference>
<dbReference type="KEGG" id="spo:2542627"/>
<dbReference type="KEGG" id="spo:2543349"/>
<dbReference type="PomBase" id="SPAC750.04c"/>
<dbReference type="VEuPathDB" id="FungiDB:SPAC750.04c"/>
<dbReference type="VEuPathDB" id="FungiDB:SPAC977.02"/>
<dbReference type="InParanoid" id="P0CU06"/>
<dbReference type="PhylomeDB" id="P0CU06"/>
<dbReference type="PRO" id="PR:P0CU06"/>
<dbReference type="Proteomes" id="UP000002485">
    <property type="component" value="Chromosome I"/>
</dbReference>
<dbReference type="GO" id="GO:0005737">
    <property type="term" value="C:cytoplasm"/>
    <property type="evidence" value="ECO:0007669"/>
    <property type="project" value="UniProtKB-SubCell"/>
</dbReference>
<dbReference type="GO" id="GO:0031965">
    <property type="term" value="C:nuclear membrane"/>
    <property type="evidence" value="ECO:0007669"/>
    <property type="project" value="UniProtKB-SubCell"/>
</dbReference>
<dbReference type="InterPro" id="IPR018291">
    <property type="entry name" value="5TM-prot_SCHPO"/>
</dbReference>
<dbReference type="Pfam" id="PF09437">
    <property type="entry name" value="Pombe_5TM"/>
    <property type="match status" value="2"/>
</dbReference>
<accession>P0CU06</accession>
<accession>Q9P332</accession>
<reference key="1">
    <citation type="journal article" date="2002" name="Nature">
        <title>The genome sequence of Schizosaccharomyces pombe.</title>
        <authorList>
            <person name="Wood V."/>
            <person name="Gwilliam R."/>
            <person name="Rajandream M.A."/>
            <person name="Lyne M.H."/>
            <person name="Lyne R."/>
            <person name="Stewart A."/>
            <person name="Sgouros J.G."/>
            <person name="Peat N."/>
            <person name="Hayles J."/>
            <person name="Baker S.G."/>
            <person name="Basham D."/>
            <person name="Bowman S."/>
            <person name="Brooks K."/>
            <person name="Brown D."/>
            <person name="Brown S."/>
            <person name="Chillingworth T."/>
            <person name="Churcher C.M."/>
            <person name="Collins M."/>
            <person name="Connor R."/>
            <person name="Cronin A."/>
            <person name="Davis P."/>
            <person name="Feltwell T."/>
            <person name="Fraser A."/>
            <person name="Gentles S."/>
            <person name="Goble A."/>
            <person name="Hamlin N."/>
            <person name="Harris D.E."/>
            <person name="Hidalgo J."/>
            <person name="Hodgson G."/>
            <person name="Holroyd S."/>
            <person name="Hornsby T."/>
            <person name="Howarth S."/>
            <person name="Huckle E.J."/>
            <person name="Hunt S."/>
            <person name="Jagels K."/>
            <person name="James K.D."/>
            <person name="Jones L."/>
            <person name="Jones M."/>
            <person name="Leather S."/>
            <person name="McDonald S."/>
            <person name="McLean J."/>
            <person name="Mooney P."/>
            <person name="Moule S."/>
            <person name="Mungall K.L."/>
            <person name="Murphy L.D."/>
            <person name="Niblett D."/>
            <person name="Odell C."/>
            <person name="Oliver K."/>
            <person name="O'Neil S."/>
            <person name="Pearson D."/>
            <person name="Quail M.A."/>
            <person name="Rabbinowitsch E."/>
            <person name="Rutherford K.M."/>
            <person name="Rutter S."/>
            <person name="Saunders D."/>
            <person name="Seeger K."/>
            <person name="Sharp S."/>
            <person name="Skelton J."/>
            <person name="Simmonds M.N."/>
            <person name="Squares R."/>
            <person name="Squares S."/>
            <person name="Stevens K."/>
            <person name="Taylor K."/>
            <person name="Taylor R.G."/>
            <person name="Tivey A."/>
            <person name="Walsh S.V."/>
            <person name="Warren T."/>
            <person name="Whitehead S."/>
            <person name="Woodward J.R."/>
            <person name="Volckaert G."/>
            <person name="Aert R."/>
            <person name="Robben J."/>
            <person name="Grymonprez B."/>
            <person name="Weltjens I."/>
            <person name="Vanstreels E."/>
            <person name="Rieger M."/>
            <person name="Schaefer M."/>
            <person name="Mueller-Auer S."/>
            <person name="Gabel C."/>
            <person name="Fuchs M."/>
            <person name="Duesterhoeft A."/>
            <person name="Fritzc C."/>
            <person name="Holzer E."/>
            <person name="Moestl D."/>
            <person name="Hilbert H."/>
            <person name="Borzym K."/>
            <person name="Langer I."/>
            <person name="Beck A."/>
            <person name="Lehrach H."/>
            <person name="Reinhardt R."/>
            <person name="Pohl T.M."/>
            <person name="Eger P."/>
            <person name="Zimmermann W."/>
            <person name="Wedler H."/>
            <person name="Wambutt R."/>
            <person name="Purnelle B."/>
            <person name="Goffeau A."/>
            <person name="Cadieu E."/>
            <person name="Dreano S."/>
            <person name="Gloux S."/>
            <person name="Lelaure V."/>
            <person name="Mottier S."/>
            <person name="Galibert F."/>
            <person name="Aves S.J."/>
            <person name="Xiang Z."/>
            <person name="Hunt C."/>
            <person name="Moore K."/>
            <person name="Hurst S.M."/>
            <person name="Lucas M."/>
            <person name="Rochet M."/>
            <person name="Gaillardin C."/>
            <person name="Tallada V.A."/>
            <person name="Garzon A."/>
            <person name="Thode G."/>
            <person name="Daga R.R."/>
            <person name="Cruzado L."/>
            <person name="Jimenez J."/>
            <person name="Sanchez M."/>
            <person name="del Rey F."/>
            <person name="Benito J."/>
            <person name="Dominguez A."/>
            <person name="Revuelta J.L."/>
            <person name="Moreno S."/>
            <person name="Armstrong J."/>
            <person name="Forsburg S.L."/>
            <person name="Cerutti L."/>
            <person name="Lowe T."/>
            <person name="McCombie W.R."/>
            <person name="Paulsen I."/>
            <person name="Potashkin J."/>
            <person name="Shpakovski G.V."/>
            <person name="Ussery D."/>
            <person name="Barrell B.G."/>
            <person name="Nurse P."/>
        </authorList>
    </citation>
    <scope>NUCLEOTIDE SEQUENCE [LARGE SCALE GENOMIC DNA]</scope>
    <source>
        <strain>972 / ATCC 24843</strain>
    </source>
</reference>
<evidence type="ECO:0000250" key="1">
    <source>
        <dbReference type="UniProtKB" id="P0CU07"/>
    </source>
</evidence>
<evidence type="ECO:0000255" key="2"/>
<evidence type="ECO:0000305" key="3"/>
<keyword id="KW-0963">Cytoplasm</keyword>
<keyword id="KW-0472">Membrane</keyword>
<keyword id="KW-0539">Nucleus</keyword>
<keyword id="KW-1185">Reference proteome</keyword>
<keyword id="KW-0812">Transmembrane</keyword>
<keyword id="KW-1133">Transmembrane helix</keyword>
<name>YLZ4_SCHPO</name>
<sequence length="146" mass="17161">MALLKKINTQVNRIMKNSSLVQNICFDRVPLFIPRLSLTVKYCLAVKLLIYLLYCWYIYSEVPSASSKFRSFTFGCVVVYHNKFFPRFIRTHSINSIRTFSKFQVIILFSIEKVTRSESKNHSYSKTDISDLHQGYNNPPSRFISR</sequence>
<feature type="chain" id="PRO_0000373862" description="UPF0742 protein SPAC750.04c">
    <location>
        <begin position="1"/>
        <end position="146"/>
    </location>
</feature>
<feature type="transmembrane region" description="Helical" evidence="2">
    <location>
        <begin position="38"/>
        <end position="60"/>
    </location>
</feature>